<organism>
    <name type="scientific">Trypanosoma cruzi (strain CL Brener)</name>
    <dbReference type="NCBI Taxonomy" id="353153"/>
    <lineage>
        <taxon>Eukaryota</taxon>
        <taxon>Discoba</taxon>
        <taxon>Euglenozoa</taxon>
        <taxon>Kinetoplastea</taxon>
        <taxon>Metakinetoplastina</taxon>
        <taxon>Trypanosomatida</taxon>
        <taxon>Trypanosomatidae</taxon>
        <taxon>Trypanosoma</taxon>
        <taxon>Schizotrypanum</taxon>
    </lineage>
</organism>
<comment type="function">
    <text evidence="2 4 5">Catalyzes the interconversion of L- and D-proline. Secreted isoform 1 contributes to parasite immune evasion by acting as a B-cell mitogen. Probably involved in parasite differentiation and infectivity.</text>
</comment>
<comment type="catalytic activity">
    <reaction evidence="2">
        <text>L-proline = D-proline</text>
        <dbReference type="Rhea" id="RHEA:10680"/>
        <dbReference type="ChEBI" id="CHEBI:57726"/>
        <dbReference type="ChEBI" id="CHEBI:60039"/>
        <dbReference type="EC" id="5.1.1.4"/>
    </reaction>
</comment>
<comment type="activity regulation">
    <text evidence="2">Inhibited by maleic acid, iodoacetamide, iodoacetate and, most particularly, pyrrole-2-carboxylic acid.</text>
</comment>
<comment type="biophysicochemical properties">
    <kinetics>
        <KM evidence="3">29 mM for L-proline</KM>
        <Vmax evidence="3">0.053 mmol/sec/ug enzyme</Vmax>
    </kinetics>
    <phDependence>
        <text evidence="3">Optimum pH is 5.5-7.0.</text>
    </phDependence>
</comment>
<comment type="subunit">
    <text evidence="3 5">Homodimer.</text>
</comment>
<comment type="subcellular location">
    <molecule>Isoform 1</molecule>
    <subcellularLocation>
        <location evidence="4">Secreted</location>
    </subcellularLocation>
    <subcellularLocation>
        <location evidence="4">Membrane</location>
    </subcellularLocation>
    <text>Membrane-bound and secreted upon differentiation of the parasite into non-dividing infective forms, suggesting that isoform 1 appears upon differentiation (PubMed:16164548).</text>
</comment>
<comment type="subcellular location">
    <molecule>Isoform 2</molecule>
    <subcellularLocation>
        <location evidence="2 4">Cytoplasm</location>
    </subcellularLocation>
    <text>Cytoplasmic in replicative non-infective forms (PubMed:16164548).</text>
</comment>
<comment type="alternative products">
    <event type="alternative splicing"/>
    <isoform>
        <id>Q4DA80-1</id>
        <name>1</name>
        <sequence type="displayed"/>
    </isoform>
    <isoform>
        <id>Q4DA80-2</id>
        <name>2</name>
        <sequence type="described" ref="VSP_025849"/>
    </isoform>
</comment>
<comment type="similarity">
    <text evidence="6">Belongs to the proline racemase family.</text>
</comment>
<comment type="sequence caution" evidence="6">
    <conflict type="erroneous gene model prediction">
        <sequence resource="EMBL-CDS" id="EAN89436"/>
    </conflict>
</comment>
<gene>
    <name type="primary">PA45-A</name>
    <name type="ORF">Tc00.1047053506795.80</name>
</gene>
<name>PRCMA_TRYCC</name>
<evidence type="ECO:0000255" key="1"/>
<evidence type="ECO:0000269" key="2">
    <source>
    </source>
</evidence>
<evidence type="ECO:0000269" key="3">
    <source>
    </source>
</evidence>
<evidence type="ECO:0000269" key="4">
    <source>
    </source>
</evidence>
<evidence type="ECO:0000269" key="5">
    <source>
    </source>
</evidence>
<evidence type="ECO:0000305" key="6"/>
<evidence type="ECO:0007829" key="7">
    <source>
        <dbReference type="PDB" id="6HJF"/>
    </source>
</evidence>
<evidence type="ECO:0007829" key="8">
    <source>
        <dbReference type="PDB" id="6HJG"/>
    </source>
</evidence>
<protein>
    <recommendedName>
        <fullName>Proline racemase A</fullName>
        <ecNumber>5.1.1.4</ecNumber>
    </recommendedName>
    <alternativeName>
        <fullName>TcPA45-A</fullName>
    </alternativeName>
    <alternativeName>
        <fullName>TcPRACA</fullName>
    </alternativeName>
    <alternativeName>
        <fullName>rTcPA45</fullName>
    </alternativeName>
</protein>
<dbReference type="EC" id="5.1.1.4"/>
<dbReference type="EMBL" id="AF195522">
    <property type="protein sequence ID" value="AAF97423.1"/>
    <property type="molecule type" value="Genomic_DNA"/>
</dbReference>
<dbReference type="EMBL" id="AAHK01000747">
    <property type="protein sequence ID" value="EAN89436.1"/>
    <property type="status" value="ALT_SEQ"/>
    <property type="molecule type" value="Genomic_DNA"/>
</dbReference>
<dbReference type="RefSeq" id="XP_811287.1">
    <property type="nucleotide sequence ID" value="XM_806194.1"/>
</dbReference>
<dbReference type="PDB" id="1W61">
    <property type="method" value="X-ray"/>
    <property type="resolution" value="2.10 A"/>
    <property type="chains" value="A/B=32-423"/>
</dbReference>
<dbReference type="PDB" id="1W62">
    <property type="method" value="X-ray"/>
    <property type="resolution" value="2.50 A"/>
    <property type="chains" value="A/B=32-423"/>
</dbReference>
<dbReference type="PDB" id="6HJE">
    <property type="method" value="X-ray"/>
    <property type="resolution" value="2.00 A"/>
    <property type="chains" value="A/B=32-423"/>
</dbReference>
<dbReference type="PDB" id="6HJF">
    <property type="method" value="X-ray"/>
    <property type="resolution" value="1.70 A"/>
    <property type="chains" value="A/B=32-423"/>
</dbReference>
<dbReference type="PDB" id="6HJG">
    <property type="method" value="X-ray"/>
    <property type="resolution" value="1.90 A"/>
    <property type="chains" value="A/B=32-423"/>
</dbReference>
<dbReference type="PDBsum" id="1W61"/>
<dbReference type="PDBsum" id="1W62"/>
<dbReference type="PDBsum" id="6HJE"/>
<dbReference type="PDBsum" id="6HJF"/>
<dbReference type="PDBsum" id="6HJG"/>
<dbReference type="SMR" id="Q4DA80"/>
<dbReference type="DIP" id="DIP-61100N"/>
<dbReference type="STRING" id="353153.Q4DA80"/>
<dbReference type="GlyCosmos" id="Q4DA80">
    <property type="glycosylation" value="3 sites, No reported glycans"/>
</dbReference>
<dbReference type="PaxDb" id="353153-Q4DA80"/>
<dbReference type="EnsemblProtists" id="EAN89436">
    <property type="protein sequence ID" value="EAN89436"/>
    <property type="gene ID" value="Tc00.1047053506795.80"/>
</dbReference>
<dbReference type="GeneID" id="3542225"/>
<dbReference type="KEGG" id="tcr:506795.80"/>
<dbReference type="eggNOG" id="ENOG502QRPF">
    <property type="taxonomic scope" value="Eukaryota"/>
</dbReference>
<dbReference type="InParanoid" id="Q4DA80"/>
<dbReference type="BRENDA" id="5.1.1.4">
    <property type="organism ID" value="6524"/>
</dbReference>
<dbReference type="SABIO-RK" id="Q4DA80"/>
<dbReference type="EvolutionaryTrace" id="Q4DA80"/>
<dbReference type="Proteomes" id="UP000002296">
    <property type="component" value="Unassembled WGS sequence"/>
</dbReference>
<dbReference type="GO" id="GO:0005737">
    <property type="term" value="C:cytoplasm"/>
    <property type="evidence" value="ECO:0007669"/>
    <property type="project" value="UniProtKB-SubCell"/>
</dbReference>
<dbReference type="GO" id="GO:0005576">
    <property type="term" value="C:extracellular region"/>
    <property type="evidence" value="ECO:0007669"/>
    <property type="project" value="UniProtKB-SubCell"/>
</dbReference>
<dbReference type="GO" id="GO:0016020">
    <property type="term" value="C:membrane"/>
    <property type="evidence" value="ECO:0007669"/>
    <property type="project" value="UniProtKB-SubCell"/>
</dbReference>
<dbReference type="GO" id="GO:0047580">
    <property type="term" value="F:4-hydroxyproline epimerase activity"/>
    <property type="evidence" value="ECO:0007669"/>
    <property type="project" value="TreeGrafter"/>
</dbReference>
<dbReference type="GO" id="GO:0018112">
    <property type="term" value="F:proline racemase activity"/>
    <property type="evidence" value="ECO:0007669"/>
    <property type="project" value="UniProtKB-EC"/>
</dbReference>
<dbReference type="FunFam" id="3.10.310.10:FF:000005">
    <property type="entry name" value="Proline racemase"/>
    <property type="match status" value="1"/>
</dbReference>
<dbReference type="Gene3D" id="3.10.310.10">
    <property type="entry name" value="Diaminopimelate Epimerase, Chain A, domain 1"/>
    <property type="match status" value="2"/>
</dbReference>
<dbReference type="InterPro" id="IPR008794">
    <property type="entry name" value="Pro_racemase_fam"/>
</dbReference>
<dbReference type="PANTHER" id="PTHR33442:SF5">
    <property type="entry name" value="BIFUNCTIONAL TRANS-3-HYDROXY-L-PROLINE DEHYDRATASE_2-EPIMERASE"/>
    <property type="match status" value="1"/>
</dbReference>
<dbReference type="PANTHER" id="PTHR33442">
    <property type="entry name" value="TRANS-3-HYDROXY-L-PROLINE DEHYDRATASE"/>
    <property type="match status" value="1"/>
</dbReference>
<dbReference type="Pfam" id="PF05544">
    <property type="entry name" value="Pro_racemase"/>
    <property type="match status" value="1"/>
</dbReference>
<dbReference type="SFLD" id="SFLDS00028">
    <property type="entry name" value="Proline_Racemase"/>
    <property type="match status" value="1"/>
</dbReference>
<dbReference type="SUPFAM" id="SSF54506">
    <property type="entry name" value="Diaminopimelate epimerase-like"/>
    <property type="match status" value="1"/>
</dbReference>
<accession>Q4DA80</accession>
<accession>Q9NCP4</accession>
<keyword id="KW-0002">3D-structure</keyword>
<keyword id="KW-0025">Alternative splicing</keyword>
<keyword id="KW-0963">Cytoplasm</keyword>
<keyword id="KW-0217">Developmental protein</keyword>
<keyword id="KW-0325">Glycoprotein</keyword>
<keyword id="KW-0413">Isomerase</keyword>
<keyword id="KW-0472">Membrane</keyword>
<keyword id="KW-1185">Reference proteome</keyword>
<keyword id="KW-0964">Secreted</keyword>
<keyword id="KW-0732">Signal</keyword>
<proteinExistence type="evidence at protein level"/>
<reference key="1">
    <citation type="journal article" date="2000" name="Nat. Med.">
        <title>A B-cell mitogen from a pathogenic trypanosome is a eukaryotic proline racemase.</title>
        <authorList>
            <person name="Reina-San-Martin B."/>
            <person name="Degrave W."/>
            <person name="Rougeot C."/>
            <person name="Cosson A."/>
            <person name="Chamond N."/>
            <person name="Cordeiro-da-Silva A."/>
            <person name="Arala-Chaves M."/>
            <person name="Coutinho A."/>
            <person name="Minoprio P."/>
        </authorList>
    </citation>
    <scope>NUCLEOTIDE SEQUENCE [GENOMIC DNA]</scope>
    <scope>CATALYTIC ACTIVITY</scope>
    <scope>FUNCTION</scope>
    <scope>ACTIVITY REGULATION</scope>
    <scope>SUBCELLULAR LOCATION</scope>
    <source>
        <strain>CL Brener</strain>
    </source>
</reference>
<reference key="2">
    <citation type="journal article" date="2003" name="J. Biol. Chem.">
        <title>Biochemical characterization of proline racemases from the human protozoan parasite Trypanosoma cruzi and definition of putative protein signatures.</title>
        <authorList>
            <person name="Chamond N."/>
            <person name="Gregoire C."/>
            <person name="Coatnoan N."/>
            <person name="Rougeot C."/>
            <person name="Freitas-Junior L.H."/>
            <person name="da Silveira J.F."/>
            <person name="Degrave W.M."/>
            <person name="Minoprio P."/>
        </authorList>
    </citation>
    <scope>NUCLEOTIDE SEQUENCE [GENOMIC DNA]</scope>
    <scope>SUBUNIT</scope>
    <scope>BIOPHYSICOCHEMICAL PROPERTIES</scope>
    <scope>MUTAGENESIS OF CYS-330</scope>
    <source>
        <strain>CL Brener</strain>
    </source>
</reference>
<reference key="3">
    <citation type="journal article" date="2005" name="Mol. Microbiol.">
        <title>Trypanosoma cruzi proline racemases are involved in parasite differentiation and infectivity.</title>
        <authorList>
            <person name="Chamond N."/>
            <person name="Goytia M."/>
            <person name="Coatnoan N."/>
            <person name="Barale J.-C."/>
            <person name="Cosson A."/>
            <person name="Degrave W.M."/>
            <person name="Minoprio P."/>
        </authorList>
    </citation>
    <scope>NUCLEOTIDE SEQUENCE [GENOMIC DNA]</scope>
    <scope>ALTERNATIVE SPLICING (ISOFORMS 1 AND 2)</scope>
    <scope>FUNCTION</scope>
    <scope>SUBCELLULAR LOCATION</scope>
    <source>
        <strain>CL Brener</strain>
    </source>
</reference>
<reference key="4">
    <citation type="journal article" date="2005" name="Science">
        <title>The genome sequence of Trypanosoma cruzi, etiologic agent of Chagas disease.</title>
        <authorList>
            <person name="El-Sayed N.M.A."/>
            <person name="Myler P.J."/>
            <person name="Bartholomeu D.C."/>
            <person name="Nilsson D."/>
            <person name="Aggarwal G."/>
            <person name="Tran A.-N."/>
            <person name="Ghedin E."/>
            <person name="Worthey E.A."/>
            <person name="Delcher A.L."/>
            <person name="Blandin G."/>
            <person name="Westenberger S.J."/>
            <person name="Caler E."/>
            <person name="Cerqueira G.C."/>
            <person name="Branche C."/>
            <person name="Haas B."/>
            <person name="Anupama A."/>
            <person name="Arner E."/>
            <person name="Aslund L."/>
            <person name="Attipoe P."/>
            <person name="Bontempi E."/>
            <person name="Bringaud F."/>
            <person name="Burton P."/>
            <person name="Cadag E."/>
            <person name="Campbell D.A."/>
            <person name="Carrington M."/>
            <person name="Crabtree J."/>
            <person name="Darban H."/>
            <person name="da Silveira J.F."/>
            <person name="de Jong P."/>
            <person name="Edwards K."/>
            <person name="Englund P.T."/>
            <person name="Fazelina G."/>
            <person name="Feldblyum T."/>
            <person name="Ferella M."/>
            <person name="Frasch A.C."/>
            <person name="Gull K."/>
            <person name="Horn D."/>
            <person name="Hou L."/>
            <person name="Huang Y."/>
            <person name="Kindlund E."/>
            <person name="Klingbeil M."/>
            <person name="Kluge S."/>
            <person name="Koo H."/>
            <person name="Lacerda D."/>
            <person name="Levin M.J."/>
            <person name="Lorenzi H."/>
            <person name="Louie T."/>
            <person name="Machado C.R."/>
            <person name="McCulloch R."/>
            <person name="McKenna A."/>
            <person name="Mizuno Y."/>
            <person name="Mottram J.C."/>
            <person name="Nelson S."/>
            <person name="Ochaya S."/>
            <person name="Osoegawa K."/>
            <person name="Pai G."/>
            <person name="Parsons M."/>
            <person name="Pentony M."/>
            <person name="Pettersson U."/>
            <person name="Pop M."/>
            <person name="Ramirez J.L."/>
            <person name="Rinta J."/>
            <person name="Robertson L."/>
            <person name="Salzberg S.L."/>
            <person name="Sanchez D.O."/>
            <person name="Seyler A."/>
            <person name="Sharma R."/>
            <person name="Shetty J."/>
            <person name="Simpson A.J."/>
            <person name="Sisk E."/>
            <person name="Tammi M.T."/>
            <person name="Tarleton R."/>
            <person name="Teixeira S."/>
            <person name="Van Aken S."/>
            <person name="Vogt C."/>
            <person name="Ward P.N."/>
            <person name="Wickstead B."/>
            <person name="Wortman J."/>
            <person name="White O."/>
            <person name="Fraser C.M."/>
            <person name="Stuart K.D."/>
            <person name="Andersson B."/>
        </authorList>
    </citation>
    <scope>NUCLEOTIDE SEQUENCE [LARGE SCALE GENOMIC DNA]</scope>
    <source>
        <strain>CL Brener</strain>
    </source>
</reference>
<reference key="5">
    <citation type="journal article" date="2006" name="Proc. Natl. Acad. Sci. U.S.A.">
        <title>Crystal structure, catalytic mechanism, and mitogenic properties of Trypanosoma cruzi proline racemase.</title>
        <authorList>
            <person name="Buschiazzo A."/>
            <person name="Goytia M."/>
            <person name="Schaeffer F."/>
            <person name="Degrave W."/>
            <person name="Shepard W."/>
            <person name="Gregoire C."/>
            <person name="Chamond N."/>
            <person name="Cosson A."/>
            <person name="Berneman A."/>
            <person name="Coatnoan N."/>
            <person name="Alzari P.M."/>
            <person name="Minoprio P."/>
        </authorList>
    </citation>
    <scope>X-RAY CRYSTALLOGRAPHY (2.1 ANGSTROMS) OF 32-393 IN COMPLEX WITH SUBSTRATE ANALOG</scope>
    <scope>FUNCTION</scope>
    <scope>SUBUNIT</scope>
    <scope>MUTAGENESIS OF CYS-160 AND CYS-330</scope>
</reference>
<sequence>MRKSVCPKQKFFFSAFPFFFFFCVFPLISRTGQEKLLFDQKYKIIKGEKKEKKKNQRANRREHQQKREIMRFKKSFTCIDMHTEGEAARIVTSGLPHIPGSNMAEKKAYLQENMDYLRRGIMLEPRGHDDMFGAFLFDPIEEGADLGMVFMDTGGYLNMCGHNSIAAVTAAVETGIVSVPAKATNVPVVLDTPAGLVRGTAHLQSGTESEVSNASIINVPSFLYQQDVVVVLPKPYGEVRVDIAFGGNFFAIVPAEQLGIDISVQNLSRLQEAGELLRTEINRSVKVQHPQLPHINTVDCVEIYGPPTNPEANYKNVVIFGNRQADRSPCGTGTSAKMATLYAKGQLRIGETFVYESILGSLFQGRVLGEERIPGVKVPVTKDAEEGMLVVTAEITGKAFIMGFNTMLFDPTDPFKNGFTLKQ</sequence>
<feature type="signal peptide" evidence="1">
    <location>
        <begin position="1"/>
        <end position="31"/>
    </location>
</feature>
<feature type="chain" id="PRO_5000057225" description="Proline racemase A">
    <location>
        <begin position="32"/>
        <end position="423"/>
    </location>
</feature>
<feature type="active site" description="Proton acceptor" evidence="6">
    <location>
        <position position="160"/>
    </location>
</feature>
<feature type="active site" description="Proton donor" evidence="6">
    <location>
        <position position="330"/>
    </location>
</feature>
<feature type="binding site">
    <location>
        <begin position="161"/>
        <end position="162"/>
    </location>
    <ligand>
        <name>substrate</name>
    </ligand>
</feature>
<feature type="binding site">
    <location>
        <position position="326"/>
    </location>
    <ligand>
        <name>substrate</name>
    </ligand>
</feature>
<feature type="binding site">
    <location>
        <begin position="331"/>
        <end position="332"/>
    </location>
    <ligand>
        <name>substrate</name>
    </ligand>
</feature>
<feature type="glycosylation site" description="N-linked (GlcNAc...) asparagine" evidence="1">
    <location>
        <position position="213"/>
    </location>
</feature>
<feature type="glycosylation site" description="N-linked (GlcNAc...) asparagine" evidence="1">
    <location>
        <position position="266"/>
    </location>
</feature>
<feature type="glycosylation site" description="N-linked (GlcNAc...) asparagine" evidence="1">
    <location>
        <position position="282"/>
    </location>
</feature>
<feature type="splice variant" id="VSP_025849" description="In isoform 2." evidence="6">
    <location>
        <begin position="1"/>
        <end position="69"/>
    </location>
</feature>
<feature type="mutagenesis site" description="Loss of enzyme activity, without abrogating mitogenic properties." evidence="5">
    <original>C</original>
    <variation>S</variation>
    <location>
        <position position="160"/>
    </location>
</feature>
<feature type="mutagenesis site" description="Loss of enzyme activity, without abrogating mitogenic properties." evidence="3 5">
    <original>C</original>
    <variation>S</variation>
    <location>
        <position position="330"/>
    </location>
</feature>
<feature type="sequence conflict" description="In Ref. 1; AAF97423." evidence="6" ref="1">
    <original>I</original>
    <variation>M</variation>
    <location>
        <position position="79"/>
    </location>
</feature>
<feature type="helix" evidence="8">
    <location>
        <begin position="52"/>
        <end position="67"/>
    </location>
</feature>
<feature type="turn" evidence="7">
    <location>
        <begin position="71"/>
        <end position="74"/>
    </location>
</feature>
<feature type="strand" evidence="7">
    <location>
        <begin position="76"/>
        <end position="83"/>
    </location>
</feature>
<feature type="strand" evidence="7">
    <location>
        <begin position="86"/>
        <end position="93"/>
    </location>
</feature>
<feature type="helix" evidence="7">
    <location>
        <begin position="103"/>
        <end position="113"/>
    </location>
</feature>
<feature type="helix" evidence="7">
    <location>
        <begin position="115"/>
        <end position="122"/>
    </location>
</feature>
<feature type="strand" evidence="7">
    <location>
        <begin position="132"/>
        <end position="137"/>
    </location>
</feature>
<feature type="strand" evidence="7">
    <location>
        <begin position="145"/>
        <end position="154"/>
    </location>
</feature>
<feature type="helix" evidence="7">
    <location>
        <begin position="161"/>
        <end position="173"/>
    </location>
</feature>
<feature type="strand" evidence="7">
    <location>
        <begin position="184"/>
        <end position="192"/>
    </location>
</feature>
<feature type="strand" evidence="7">
    <location>
        <begin position="195"/>
        <end position="203"/>
    </location>
</feature>
<feature type="strand" evidence="7">
    <location>
        <begin position="207"/>
        <end position="209"/>
    </location>
</feature>
<feature type="strand" evidence="7">
    <location>
        <begin position="211"/>
        <end position="217"/>
    </location>
</feature>
<feature type="strand" evidence="7">
    <location>
        <begin position="221"/>
        <end position="231"/>
    </location>
</feature>
<feature type="turn" evidence="7">
    <location>
        <begin position="234"/>
        <end position="236"/>
    </location>
</feature>
<feature type="strand" evidence="7">
    <location>
        <begin position="238"/>
        <end position="254"/>
    </location>
</feature>
<feature type="helix" evidence="7">
    <location>
        <begin position="255"/>
        <end position="258"/>
    </location>
</feature>
<feature type="helix" evidence="7">
    <location>
        <begin position="264"/>
        <end position="266"/>
    </location>
</feature>
<feature type="helix" evidence="7">
    <location>
        <begin position="267"/>
        <end position="284"/>
    </location>
</feature>
<feature type="strand" evidence="7">
    <location>
        <begin position="297"/>
        <end position="305"/>
    </location>
</feature>
<feature type="strand" evidence="7">
    <location>
        <begin position="313"/>
        <end position="320"/>
    </location>
</feature>
<feature type="turn" evidence="7">
    <location>
        <begin position="321"/>
        <end position="323"/>
    </location>
</feature>
<feature type="helix" evidence="7">
    <location>
        <begin position="331"/>
        <end position="343"/>
    </location>
</feature>
<feature type="strand" evidence="7">
    <location>
        <begin position="352"/>
        <end position="357"/>
    </location>
</feature>
<feature type="strand" evidence="7">
    <location>
        <begin position="362"/>
        <end position="373"/>
    </location>
</feature>
<feature type="strand" evidence="7">
    <location>
        <begin position="385"/>
        <end position="397"/>
    </location>
</feature>
<feature type="strand" evidence="7">
    <location>
        <begin position="399"/>
        <end position="407"/>
    </location>
</feature>
<feature type="turn" evidence="7">
    <location>
        <begin position="414"/>
        <end position="417"/>
    </location>
</feature>